<feature type="chain" id="PRO_1000000314" description="Adenine phosphoribosyltransferase">
    <location>
        <begin position="1"/>
        <end position="175"/>
    </location>
</feature>
<dbReference type="EC" id="2.4.2.7" evidence="1"/>
<dbReference type="EMBL" id="CP000103">
    <property type="protein sequence ID" value="ABB74238.1"/>
    <property type="molecule type" value="Genomic_DNA"/>
</dbReference>
<dbReference type="RefSeq" id="WP_011380283.1">
    <property type="nucleotide sequence ID" value="NC_007614.1"/>
</dbReference>
<dbReference type="SMR" id="Q2YAI3"/>
<dbReference type="STRING" id="323848.Nmul_A0935"/>
<dbReference type="KEGG" id="nmu:Nmul_A0935"/>
<dbReference type="eggNOG" id="COG0503">
    <property type="taxonomic scope" value="Bacteria"/>
</dbReference>
<dbReference type="HOGENOM" id="CLU_063339_3_0_4"/>
<dbReference type="OrthoDB" id="9803963at2"/>
<dbReference type="UniPathway" id="UPA00588">
    <property type="reaction ID" value="UER00646"/>
</dbReference>
<dbReference type="Proteomes" id="UP000002718">
    <property type="component" value="Chromosome"/>
</dbReference>
<dbReference type="GO" id="GO:0005737">
    <property type="term" value="C:cytoplasm"/>
    <property type="evidence" value="ECO:0007669"/>
    <property type="project" value="UniProtKB-SubCell"/>
</dbReference>
<dbReference type="GO" id="GO:0003999">
    <property type="term" value="F:adenine phosphoribosyltransferase activity"/>
    <property type="evidence" value="ECO:0007669"/>
    <property type="project" value="UniProtKB-UniRule"/>
</dbReference>
<dbReference type="GO" id="GO:0006168">
    <property type="term" value="P:adenine salvage"/>
    <property type="evidence" value="ECO:0007669"/>
    <property type="project" value="InterPro"/>
</dbReference>
<dbReference type="GO" id="GO:0044209">
    <property type="term" value="P:AMP salvage"/>
    <property type="evidence" value="ECO:0007669"/>
    <property type="project" value="UniProtKB-UniRule"/>
</dbReference>
<dbReference type="GO" id="GO:0006166">
    <property type="term" value="P:purine ribonucleoside salvage"/>
    <property type="evidence" value="ECO:0007669"/>
    <property type="project" value="UniProtKB-KW"/>
</dbReference>
<dbReference type="CDD" id="cd06223">
    <property type="entry name" value="PRTases_typeI"/>
    <property type="match status" value="1"/>
</dbReference>
<dbReference type="FunFam" id="3.40.50.2020:FF:000004">
    <property type="entry name" value="Adenine phosphoribosyltransferase"/>
    <property type="match status" value="1"/>
</dbReference>
<dbReference type="Gene3D" id="3.40.50.2020">
    <property type="match status" value="1"/>
</dbReference>
<dbReference type="HAMAP" id="MF_00004">
    <property type="entry name" value="Aden_phosphoribosyltr"/>
    <property type="match status" value="1"/>
</dbReference>
<dbReference type="InterPro" id="IPR005764">
    <property type="entry name" value="Ade_phspho_trans"/>
</dbReference>
<dbReference type="InterPro" id="IPR050120">
    <property type="entry name" value="Adenine_PRTase"/>
</dbReference>
<dbReference type="InterPro" id="IPR000836">
    <property type="entry name" value="PRibTrfase_dom"/>
</dbReference>
<dbReference type="InterPro" id="IPR029057">
    <property type="entry name" value="PRTase-like"/>
</dbReference>
<dbReference type="NCBIfam" id="TIGR01090">
    <property type="entry name" value="apt"/>
    <property type="match status" value="1"/>
</dbReference>
<dbReference type="NCBIfam" id="NF002632">
    <property type="entry name" value="PRK02304.1-1"/>
    <property type="match status" value="1"/>
</dbReference>
<dbReference type="NCBIfam" id="NF002634">
    <property type="entry name" value="PRK02304.1-3"/>
    <property type="match status" value="1"/>
</dbReference>
<dbReference type="NCBIfam" id="NF002636">
    <property type="entry name" value="PRK02304.1-5"/>
    <property type="match status" value="1"/>
</dbReference>
<dbReference type="PANTHER" id="PTHR11776">
    <property type="entry name" value="ADENINE PHOSPHORIBOSYLTRANSFERASE"/>
    <property type="match status" value="1"/>
</dbReference>
<dbReference type="PANTHER" id="PTHR11776:SF7">
    <property type="entry name" value="PHOSPHORIBOSYLTRANSFERASE DOMAIN-CONTAINING PROTEIN"/>
    <property type="match status" value="1"/>
</dbReference>
<dbReference type="Pfam" id="PF00156">
    <property type="entry name" value="Pribosyltran"/>
    <property type="match status" value="1"/>
</dbReference>
<dbReference type="SUPFAM" id="SSF53271">
    <property type="entry name" value="PRTase-like"/>
    <property type="match status" value="1"/>
</dbReference>
<dbReference type="PROSITE" id="PS00103">
    <property type="entry name" value="PUR_PYR_PR_TRANSFER"/>
    <property type="match status" value="1"/>
</dbReference>
<accession>Q2YAI3</accession>
<protein>
    <recommendedName>
        <fullName evidence="1">Adenine phosphoribosyltransferase</fullName>
        <shortName evidence="1">APRT</shortName>
        <ecNumber evidence="1">2.4.2.7</ecNumber>
    </recommendedName>
</protein>
<name>APT_NITMU</name>
<evidence type="ECO:0000255" key="1">
    <source>
        <dbReference type="HAMAP-Rule" id="MF_00004"/>
    </source>
</evidence>
<organism>
    <name type="scientific">Nitrosospira multiformis (strain ATCC 25196 / NCIMB 11849 / C 71)</name>
    <dbReference type="NCBI Taxonomy" id="323848"/>
    <lineage>
        <taxon>Bacteria</taxon>
        <taxon>Pseudomonadati</taxon>
        <taxon>Pseudomonadota</taxon>
        <taxon>Betaproteobacteria</taxon>
        <taxon>Nitrosomonadales</taxon>
        <taxon>Nitrosomonadaceae</taxon>
        <taxon>Nitrosospira</taxon>
    </lineage>
</organism>
<keyword id="KW-0963">Cytoplasm</keyword>
<keyword id="KW-0328">Glycosyltransferase</keyword>
<keyword id="KW-0660">Purine salvage</keyword>
<keyword id="KW-1185">Reference proteome</keyword>
<keyword id="KW-0808">Transferase</keyword>
<proteinExistence type="inferred from homology"/>
<reference key="1">
    <citation type="submission" date="2005-08" db="EMBL/GenBank/DDBJ databases">
        <title>Complete sequence of chromosome 1 of Nitrosospira multiformis ATCC 25196.</title>
        <authorList>
            <person name="Copeland A."/>
            <person name="Lucas S."/>
            <person name="Lapidus A."/>
            <person name="Barry K."/>
            <person name="Detter J.C."/>
            <person name="Glavina T."/>
            <person name="Hammon N."/>
            <person name="Israni S."/>
            <person name="Pitluck S."/>
            <person name="Chain P."/>
            <person name="Malfatti S."/>
            <person name="Shin M."/>
            <person name="Vergez L."/>
            <person name="Schmutz J."/>
            <person name="Larimer F."/>
            <person name="Land M."/>
            <person name="Hauser L."/>
            <person name="Kyrpides N."/>
            <person name="Lykidis A."/>
            <person name="Richardson P."/>
        </authorList>
    </citation>
    <scope>NUCLEOTIDE SEQUENCE [LARGE SCALE GENOMIC DNA]</scope>
    <source>
        <strain>ATCC 25196 / NCIMB 11849 / C 71</strain>
    </source>
</reference>
<gene>
    <name evidence="1" type="primary">apt</name>
    <name type="ordered locus">Nmul_A0935</name>
</gene>
<comment type="function">
    <text evidence="1">Catalyzes a salvage reaction resulting in the formation of AMP, that is energically less costly than de novo synthesis.</text>
</comment>
<comment type="catalytic activity">
    <reaction evidence="1">
        <text>AMP + diphosphate = 5-phospho-alpha-D-ribose 1-diphosphate + adenine</text>
        <dbReference type="Rhea" id="RHEA:16609"/>
        <dbReference type="ChEBI" id="CHEBI:16708"/>
        <dbReference type="ChEBI" id="CHEBI:33019"/>
        <dbReference type="ChEBI" id="CHEBI:58017"/>
        <dbReference type="ChEBI" id="CHEBI:456215"/>
        <dbReference type="EC" id="2.4.2.7"/>
    </reaction>
</comment>
<comment type="pathway">
    <text evidence="1">Purine metabolism; AMP biosynthesis via salvage pathway; AMP from adenine: step 1/1.</text>
</comment>
<comment type="subunit">
    <text evidence="1">Homodimer.</text>
</comment>
<comment type="subcellular location">
    <subcellularLocation>
        <location evidence="1">Cytoplasm</location>
    </subcellularLocation>
</comment>
<comment type="similarity">
    <text evidence="1">Belongs to the purine/pyrimidine phosphoribosyltransferase family.</text>
</comment>
<sequence>MQIKSRIRTIAHYPHEGIMFRDITTLLKDPVGLRATIQEIASRYKSMKIDKVAGIESRGFIIGAPVAYELGVGFVPVRKKGKLPAETRGRDYQLEYGSDRIEIHVDAIQKGDRVLLVDDLIATGGTAEAAAGLIHEMGGEVVECSFVIDLPDIGGRARLEDQGLKVFALCEFEGN</sequence>